<gene>
    <name type="ordered locus">RSc2549</name>
    <name type="ORF">RS00728</name>
</gene>
<proteinExistence type="inferred from homology"/>
<organism>
    <name type="scientific">Ralstonia nicotianae (strain ATCC BAA-1114 / GMI1000)</name>
    <name type="common">Ralstonia solanacearum</name>
    <dbReference type="NCBI Taxonomy" id="267608"/>
    <lineage>
        <taxon>Bacteria</taxon>
        <taxon>Pseudomonadati</taxon>
        <taxon>Pseudomonadota</taxon>
        <taxon>Betaproteobacteria</taxon>
        <taxon>Burkholderiales</taxon>
        <taxon>Burkholderiaceae</taxon>
        <taxon>Ralstonia</taxon>
        <taxon>Ralstonia solanacearum species complex</taxon>
    </lineage>
</organism>
<sequence>MPSFDVVCEANMVELKNAVEQANKEISTRFDFKGSDARVEHKDQELTLFGDDDFKLGQVKDVLLTKLAKRGVDVRFLDYQDKQKIGGDKMKQVVKIKKGVSGELSKKIVKLIKDSKIKVQGSIQGDAVRVSGAKRDDLQAVIAMLRKDVTDTPLDFNNFRD</sequence>
<feature type="chain" id="PRO_0000106196" description="Nucleotide-binding protein RSc2549">
    <location>
        <begin position="1"/>
        <end position="161"/>
    </location>
</feature>
<reference key="1">
    <citation type="journal article" date="2002" name="Nature">
        <title>Genome sequence of the plant pathogen Ralstonia solanacearum.</title>
        <authorList>
            <person name="Salanoubat M."/>
            <person name="Genin S."/>
            <person name="Artiguenave F."/>
            <person name="Gouzy J."/>
            <person name="Mangenot S."/>
            <person name="Arlat M."/>
            <person name="Billault A."/>
            <person name="Brottier P."/>
            <person name="Camus J.-C."/>
            <person name="Cattolico L."/>
            <person name="Chandler M."/>
            <person name="Choisne N."/>
            <person name="Claudel-Renard C."/>
            <person name="Cunnac S."/>
            <person name="Demange N."/>
            <person name="Gaspin C."/>
            <person name="Lavie M."/>
            <person name="Moisan A."/>
            <person name="Robert C."/>
            <person name="Saurin W."/>
            <person name="Schiex T."/>
            <person name="Siguier P."/>
            <person name="Thebault P."/>
            <person name="Whalen M."/>
            <person name="Wincker P."/>
            <person name="Levy M."/>
            <person name="Weissenbach J."/>
            <person name="Boucher C.A."/>
        </authorList>
    </citation>
    <scope>NUCLEOTIDE SEQUENCE [LARGE SCALE GENOMIC DNA]</scope>
    <source>
        <strain>ATCC BAA-1114 / GMI1000</strain>
    </source>
</reference>
<name>Y2549_RALN1</name>
<accession>Q8XWC5</accession>
<keyword id="KW-0547">Nucleotide-binding</keyword>
<keyword id="KW-1185">Reference proteome</keyword>
<dbReference type="EMBL" id="AL646052">
    <property type="protein sequence ID" value="CAD16256.1"/>
    <property type="molecule type" value="Genomic_DNA"/>
</dbReference>
<dbReference type="RefSeq" id="WP_011002464.1">
    <property type="nucleotide sequence ID" value="NC_003295.1"/>
</dbReference>
<dbReference type="SMR" id="Q8XWC5"/>
<dbReference type="STRING" id="267608.RSc2549"/>
<dbReference type="EnsemblBacteria" id="CAD16256">
    <property type="protein sequence ID" value="CAD16256"/>
    <property type="gene ID" value="RSc2549"/>
</dbReference>
<dbReference type="KEGG" id="rso:RSc2549"/>
<dbReference type="eggNOG" id="COG1666">
    <property type="taxonomic scope" value="Bacteria"/>
</dbReference>
<dbReference type="HOGENOM" id="CLU_099839_1_0_4"/>
<dbReference type="Proteomes" id="UP000001436">
    <property type="component" value="Chromosome"/>
</dbReference>
<dbReference type="GO" id="GO:0005829">
    <property type="term" value="C:cytosol"/>
    <property type="evidence" value="ECO:0007669"/>
    <property type="project" value="TreeGrafter"/>
</dbReference>
<dbReference type="GO" id="GO:0000166">
    <property type="term" value="F:nucleotide binding"/>
    <property type="evidence" value="ECO:0007669"/>
    <property type="project" value="TreeGrafter"/>
</dbReference>
<dbReference type="CDD" id="cd11740">
    <property type="entry name" value="YajQ_like"/>
    <property type="match status" value="1"/>
</dbReference>
<dbReference type="Gene3D" id="3.30.70.860">
    <property type="match status" value="1"/>
</dbReference>
<dbReference type="Gene3D" id="3.30.70.990">
    <property type="entry name" value="YajQ-like, domain 2"/>
    <property type="match status" value="1"/>
</dbReference>
<dbReference type="HAMAP" id="MF_00632">
    <property type="entry name" value="YajQ"/>
    <property type="match status" value="1"/>
</dbReference>
<dbReference type="InterPro" id="IPR007551">
    <property type="entry name" value="DUF520"/>
</dbReference>
<dbReference type="InterPro" id="IPR035571">
    <property type="entry name" value="UPF0234-like_C"/>
</dbReference>
<dbReference type="InterPro" id="IPR035570">
    <property type="entry name" value="UPF0234_N"/>
</dbReference>
<dbReference type="InterPro" id="IPR036183">
    <property type="entry name" value="YajQ-like_sf"/>
</dbReference>
<dbReference type="NCBIfam" id="NF003819">
    <property type="entry name" value="PRK05412.1"/>
    <property type="match status" value="1"/>
</dbReference>
<dbReference type="PANTHER" id="PTHR30476">
    <property type="entry name" value="UPF0234 PROTEIN YAJQ"/>
    <property type="match status" value="1"/>
</dbReference>
<dbReference type="PANTHER" id="PTHR30476:SF0">
    <property type="entry name" value="UPF0234 PROTEIN YAJQ"/>
    <property type="match status" value="1"/>
</dbReference>
<dbReference type="Pfam" id="PF04461">
    <property type="entry name" value="DUF520"/>
    <property type="match status" value="1"/>
</dbReference>
<dbReference type="SUPFAM" id="SSF89963">
    <property type="entry name" value="YajQ-like"/>
    <property type="match status" value="2"/>
</dbReference>
<comment type="function">
    <text evidence="1">Nucleotide-binding protein.</text>
</comment>
<comment type="similarity">
    <text evidence="1">Belongs to the YajQ family.</text>
</comment>
<evidence type="ECO:0000255" key="1">
    <source>
        <dbReference type="HAMAP-Rule" id="MF_00632"/>
    </source>
</evidence>
<protein>
    <recommendedName>
        <fullName evidence="1">Nucleotide-binding protein RSc2549</fullName>
    </recommendedName>
</protein>